<name>NIRF_PSEAE</name>
<accession>Q51480</accession>
<keyword id="KW-0002">3D-structure</keyword>
<keyword id="KW-0963">Cytoplasm</keyword>
<keyword id="KW-1185">Reference proteome</keyword>
<comment type="function">
    <text>Required for the biosynthesis of heme d1 of nitrite reductase. Could have a dehydrogenase activity yielding sirohydrochlorin from precorrin-2 or dehydrogenation of propionate side chain C17.</text>
</comment>
<comment type="subcellular location">
    <subcellularLocation>
        <location>Cytoplasm</location>
    </subcellularLocation>
</comment>
<gene>
    <name type="primary">nirF</name>
    <name type="ordered locus">PA0516</name>
</gene>
<proteinExistence type="evidence at protein level"/>
<organism>
    <name type="scientific">Pseudomonas aeruginosa (strain ATCC 15692 / DSM 22644 / CIP 104116 / JCM 14847 / LMG 12228 / 1C / PRS 101 / PAO1)</name>
    <dbReference type="NCBI Taxonomy" id="208964"/>
    <lineage>
        <taxon>Bacteria</taxon>
        <taxon>Pseudomonadati</taxon>
        <taxon>Pseudomonadota</taxon>
        <taxon>Gammaproteobacteria</taxon>
        <taxon>Pseudomonadales</taxon>
        <taxon>Pseudomonadaceae</taxon>
        <taxon>Pseudomonas</taxon>
    </lineage>
</organism>
<dbReference type="EMBL" id="D50473">
    <property type="protein sequence ID" value="BAA09066.1"/>
    <property type="molecule type" value="Genomic_DNA"/>
</dbReference>
<dbReference type="EMBL" id="AE004091">
    <property type="protein sequence ID" value="AAG03905.1"/>
    <property type="molecule type" value="Genomic_DNA"/>
</dbReference>
<dbReference type="PIR" id="JC4553">
    <property type="entry name" value="JC4553"/>
</dbReference>
<dbReference type="RefSeq" id="NP_249207.1">
    <property type="nucleotide sequence ID" value="NC_002516.2"/>
</dbReference>
<dbReference type="RefSeq" id="WP_003113241.1">
    <property type="nucleotide sequence ID" value="NZ_QZGE01000010.1"/>
</dbReference>
<dbReference type="PDB" id="6TV2">
    <property type="method" value="X-ray"/>
    <property type="resolution" value="1.56 A"/>
    <property type="chains" value="A/B/C/D/E/F/G/H=18-392"/>
</dbReference>
<dbReference type="PDB" id="6TV9">
    <property type="method" value="X-ray"/>
    <property type="resolution" value="1.89 A"/>
    <property type="chains" value="A/B/C/D/E/F/G/H=18-392"/>
</dbReference>
<dbReference type="PDBsum" id="6TV2"/>
<dbReference type="PDBsum" id="6TV9"/>
<dbReference type="SMR" id="Q51480"/>
<dbReference type="STRING" id="208964.PA0516"/>
<dbReference type="PaxDb" id="208964-PA0516"/>
<dbReference type="GeneID" id="882198"/>
<dbReference type="KEGG" id="pae:PA0516"/>
<dbReference type="PATRIC" id="fig|208964.12.peg.546"/>
<dbReference type="PseudoCAP" id="PA0516"/>
<dbReference type="HOGENOM" id="CLU_040920_0_0_6"/>
<dbReference type="InParanoid" id="Q51480"/>
<dbReference type="OrthoDB" id="5290932at2"/>
<dbReference type="PhylomeDB" id="Q51480"/>
<dbReference type="BioCyc" id="PAER208964:G1FZ6-521-MONOMER"/>
<dbReference type="Proteomes" id="UP000002438">
    <property type="component" value="Chromosome"/>
</dbReference>
<dbReference type="GO" id="GO:0005737">
    <property type="term" value="C:cytoplasm"/>
    <property type="evidence" value="ECO:0007669"/>
    <property type="project" value="UniProtKB-SubCell"/>
</dbReference>
<dbReference type="CDD" id="cd20778">
    <property type="entry name" value="8prop_hemeD1_NirF"/>
    <property type="match status" value="1"/>
</dbReference>
<dbReference type="Gene3D" id="2.140.10.20">
    <property type="entry name" value="C-terminal (heme d1) domain of cytochrome cd1-nitrite reductase"/>
    <property type="match status" value="1"/>
</dbReference>
<dbReference type="InterPro" id="IPR003143">
    <property type="entry name" value="Cyt_cd1_C_sf"/>
</dbReference>
<dbReference type="InterPro" id="IPR011048">
    <property type="entry name" value="Haem_d1_sf"/>
</dbReference>
<dbReference type="InterPro" id="IPR051200">
    <property type="entry name" value="Host-pathogen_enzymatic-act"/>
</dbReference>
<dbReference type="PANTHER" id="PTHR47197:SF3">
    <property type="entry name" value="DIHYDRO-HEME D1 DEHYDROGENASE"/>
    <property type="match status" value="1"/>
</dbReference>
<dbReference type="PANTHER" id="PTHR47197">
    <property type="entry name" value="PROTEIN NIRF"/>
    <property type="match status" value="1"/>
</dbReference>
<dbReference type="Pfam" id="PF02239">
    <property type="entry name" value="Cytochrom_D1"/>
    <property type="match status" value="1"/>
</dbReference>
<dbReference type="SUPFAM" id="SSF51004">
    <property type="entry name" value="C-terminal (heme d1) domain of cytochrome cd1-nitrite reductase"/>
    <property type="match status" value="1"/>
</dbReference>
<protein>
    <recommendedName>
        <fullName>Protein NirF</fullName>
    </recommendedName>
</protein>
<reference key="1">
    <citation type="journal article" date="1995" name="Gene">
        <title>Sequencing and characterization of the downstream region of the genes encoding nitrite reductase and cytochrome c-551 (nirSM) from Pseudomonas aeruginosa: identification of the gene necessary for biosynthesis of heme d1.</title>
        <authorList>
            <person name="Kawasaki S."/>
            <person name="Arai H."/>
            <person name="Igarashi Y."/>
            <person name="Kodama T."/>
        </authorList>
    </citation>
    <scope>NUCLEOTIDE SEQUENCE [GENOMIC DNA]</scope>
    <source>
        <strain>ATCC 15692 / DSM 22644 / CIP 104116 / JCM 14847 / LMG 12228 / 1C / PRS 101 / PAO1</strain>
    </source>
</reference>
<reference key="2">
    <citation type="journal article" date="2000" name="Nature">
        <title>Complete genome sequence of Pseudomonas aeruginosa PAO1, an opportunistic pathogen.</title>
        <authorList>
            <person name="Stover C.K."/>
            <person name="Pham X.-Q.T."/>
            <person name="Erwin A.L."/>
            <person name="Mizoguchi S.D."/>
            <person name="Warrener P."/>
            <person name="Hickey M.J."/>
            <person name="Brinkman F.S.L."/>
            <person name="Hufnagle W.O."/>
            <person name="Kowalik D.J."/>
            <person name="Lagrou M."/>
            <person name="Garber R.L."/>
            <person name="Goltry L."/>
            <person name="Tolentino E."/>
            <person name="Westbrock-Wadman S."/>
            <person name="Yuan Y."/>
            <person name="Brody L.L."/>
            <person name="Coulter S.N."/>
            <person name="Folger K.R."/>
            <person name="Kas A."/>
            <person name="Larbig K."/>
            <person name="Lim R.M."/>
            <person name="Smith K.A."/>
            <person name="Spencer D.H."/>
            <person name="Wong G.K.-S."/>
            <person name="Wu Z."/>
            <person name="Paulsen I.T."/>
            <person name="Reizer J."/>
            <person name="Saier M.H. Jr."/>
            <person name="Hancock R.E.W."/>
            <person name="Lory S."/>
            <person name="Olson M.V."/>
        </authorList>
    </citation>
    <scope>NUCLEOTIDE SEQUENCE [LARGE SCALE GENOMIC DNA]</scope>
    <source>
        <strain>ATCC 15692 / DSM 22644 / CIP 104116 / JCM 14847 / LMG 12228 / 1C / PRS 101 / PAO1</strain>
    </source>
</reference>
<sequence>MNLRPLAPLLLTLLAGCSQQPPLRGSGDLGVLIERADGSVQILDGTAKTSLARVEGLGDLSHASLVFSRDQRYAYVFGRDGGLTKLDLLAQRIDKRLIQGGNSIGGAISQDGRLVAVSNYEPGGVKVFDSRTLELVAEIPATRLPGQDRNSRVVGLVDAPGQRFVFSLFDSGEIWIADFSQGDTPHLTRFRDIGKQPYDALISPDGRYYMAGLFGEDGMAQLDLWHPERGVRRVLGDYGRGQRKLPVYKMPHLEGWTIASDQAFVPAVGHHQVLVLDARDWKQTDAIDVAGQPVFVMTRPDDRQIWVNFAYPDNDKVQVIDSETHEVIETLRPGPGVLHMEFSGRGDQVWISVRDADQLQVWDPYRLKRIGSLPARSPSGIFFSHRAQHIGL</sequence>
<evidence type="ECO:0007829" key="1">
    <source>
        <dbReference type="PDB" id="6TV2"/>
    </source>
</evidence>
<feature type="chain" id="PRO_0000096858" description="Protein NirF">
    <location>
        <begin position="1"/>
        <end position="392"/>
    </location>
</feature>
<feature type="strand" evidence="1">
    <location>
        <begin position="29"/>
        <end position="34"/>
    </location>
</feature>
<feature type="turn" evidence="1">
    <location>
        <begin position="35"/>
        <end position="38"/>
    </location>
</feature>
<feature type="strand" evidence="1">
    <location>
        <begin position="39"/>
        <end position="44"/>
    </location>
</feature>
<feature type="turn" evidence="1">
    <location>
        <begin position="45"/>
        <end position="48"/>
    </location>
</feature>
<feature type="strand" evidence="1">
    <location>
        <begin position="49"/>
        <end position="54"/>
    </location>
</feature>
<feature type="strand" evidence="1">
    <location>
        <begin position="61"/>
        <end position="67"/>
    </location>
</feature>
<feature type="strand" evidence="1">
    <location>
        <begin position="71"/>
        <end position="78"/>
    </location>
</feature>
<feature type="strand" evidence="1">
    <location>
        <begin position="81"/>
        <end position="87"/>
    </location>
</feature>
<feature type="turn" evidence="1">
    <location>
        <begin position="88"/>
        <end position="91"/>
    </location>
</feature>
<feature type="strand" evidence="1">
    <location>
        <begin position="92"/>
        <end position="98"/>
    </location>
</feature>
<feature type="strand" evidence="1">
    <location>
        <begin position="102"/>
        <end position="108"/>
    </location>
</feature>
<feature type="strand" evidence="1">
    <location>
        <begin position="114"/>
        <end position="119"/>
    </location>
</feature>
<feature type="turn" evidence="1">
    <location>
        <begin position="120"/>
        <end position="123"/>
    </location>
</feature>
<feature type="strand" evidence="1">
    <location>
        <begin position="124"/>
        <end position="129"/>
    </location>
</feature>
<feature type="turn" evidence="1">
    <location>
        <begin position="130"/>
        <end position="132"/>
    </location>
</feature>
<feature type="strand" evidence="1">
    <location>
        <begin position="135"/>
        <end position="140"/>
    </location>
</feature>
<feature type="strand" evidence="1">
    <location>
        <begin position="153"/>
        <end position="159"/>
    </location>
</feature>
<feature type="turn" evidence="1">
    <location>
        <begin position="160"/>
        <end position="162"/>
    </location>
</feature>
<feature type="strand" evidence="1">
    <location>
        <begin position="163"/>
        <end position="168"/>
    </location>
</feature>
<feature type="turn" evidence="1">
    <location>
        <begin position="169"/>
        <end position="172"/>
    </location>
</feature>
<feature type="strand" evidence="1">
    <location>
        <begin position="173"/>
        <end position="178"/>
    </location>
</feature>
<feature type="strand" evidence="1">
    <location>
        <begin position="182"/>
        <end position="184"/>
    </location>
</feature>
<feature type="strand" evidence="1">
    <location>
        <begin position="186"/>
        <end position="190"/>
    </location>
</feature>
<feature type="strand" evidence="1">
    <location>
        <begin position="197"/>
        <end position="202"/>
    </location>
</feature>
<feature type="strand" evidence="1">
    <location>
        <begin position="208"/>
        <end position="223"/>
    </location>
</feature>
<feature type="helix" evidence="1">
    <location>
        <begin position="227"/>
        <end position="229"/>
    </location>
</feature>
<feature type="strand" evidence="1">
    <location>
        <begin position="231"/>
        <end position="235"/>
    </location>
</feature>
<feature type="helix" evidence="1">
    <location>
        <begin position="247"/>
        <end position="249"/>
    </location>
</feature>
<feature type="helix" evidence="1">
    <location>
        <begin position="253"/>
        <end position="255"/>
    </location>
</feature>
<feature type="strand" evidence="1">
    <location>
        <begin position="260"/>
        <end position="266"/>
    </location>
</feature>
<feature type="strand" evidence="1">
    <location>
        <begin position="268"/>
        <end position="277"/>
    </location>
</feature>
<feature type="turn" evidence="1">
    <location>
        <begin position="278"/>
        <end position="281"/>
    </location>
</feature>
<feature type="strand" evidence="1">
    <location>
        <begin position="282"/>
        <end position="288"/>
    </location>
</feature>
<feature type="strand" evidence="1">
    <location>
        <begin position="293"/>
        <end position="298"/>
    </location>
</feature>
<feature type="strand" evidence="1">
    <location>
        <begin position="302"/>
        <end position="309"/>
    </location>
</feature>
<feature type="strand" evidence="1">
    <location>
        <begin position="317"/>
        <end position="321"/>
    </location>
</feature>
<feature type="turn" evidence="1">
    <location>
        <begin position="322"/>
        <end position="324"/>
    </location>
</feature>
<feature type="strand" evidence="1">
    <location>
        <begin position="327"/>
        <end position="331"/>
    </location>
</feature>
<feature type="strand" evidence="1">
    <location>
        <begin position="337"/>
        <end position="342"/>
    </location>
</feature>
<feature type="strand" evidence="1">
    <location>
        <begin position="344"/>
        <end position="347"/>
    </location>
</feature>
<feature type="strand" evidence="1">
    <location>
        <begin position="349"/>
        <end position="353"/>
    </location>
</feature>
<feature type="helix" evidence="1">
    <location>
        <begin position="354"/>
        <end position="356"/>
    </location>
</feature>
<feature type="strand" evidence="1">
    <location>
        <begin position="358"/>
        <end position="363"/>
    </location>
</feature>
<feature type="turn" evidence="1">
    <location>
        <begin position="364"/>
        <end position="367"/>
    </location>
</feature>
<feature type="strand" evidence="1">
    <location>
        <begin position="368"/>
        <end position="374"/>
    </location>
</feature>
<feature type="strand" evidence="1">
    <location>
        <begin position="376"/>
        <end position="383"/>
    </location>
</feature>
<feature type="helix" evidence="1">
    <location>
        <begin position="384"/>
        <end position="388"/>
    </location>
</feature>